<feature type="chain" id="PRO_0000350668" description="Heptaprenylglyceryl phosphate synthase">
    <location>
        <begin position="1"/>
        <end position="229"/>
    </location>
</feature>
<feature type="binding site" evidence="1">
    <location>
        <position position="12"/>
    </location>
    <ligand>
        <name>sn-glycerol 1-phosphate</name>
        <dbReference type="ChEBI" id="CHEBI:57685"/>
    </ligand>
</feature>
<feature type="binding site" evidence="1">
    <location>
        <position position="14"/>
    </location>
    <ligand>
        <name>Mg(2+)</name>
        <dbReference type="ChEBI" id="CHEBI:18420"/>
    </ligand>
</feature>
<feature type="binding site" evidence="1">
    <location>
        <position position="40"/>
    </location>
    <ligand>
        <name>Mg(2+)</name>
        <dbReference type="ChEBI" id="CHEBI:18420"/>
    </ligand>
</feature>
<feature type="binding site" evidence="1">
    <location>
        <begin position="159"/>
        <end position="164"/>
    </location>
    <ligand>
        <name>sn-glycerol 1-phosphate</name>
        <dbReference type="ChEBI" id="CHEBI:57685"/>
    </ligand>
</feature>
<feature type="binding site" evidence="1">
    <location>
        <position position="189"/>
    </location>
    <ligand>
        <name>sn-glycerol 1-phosphate</name>
        <dbReference type="ChEBI" id="CHEBI:57685"/>
    </ligand>
</feature>
<feature type="binding site" evidence="1">
    <location>
        <begin position="209"/>
        <end position="210"/>
    </location>
    <ligand>
        <name>sn-glycerol 1-phosphate</name>
        <dbReference type="ChEBI" id="CHEBI:57685"/>
    </ligand>
</feature>
<comment type="function">
    <text evidence="1">Prenyltransferase that catalyzes in vivo the transfer of the heptaprenyl moiety of heptaprenyl pyrophosphate (HepPP; 35 carbon atoms) to the C3 hydroxyl of sn-glycerol-1-phosphate (G1P), producing heptaprenylglyceryl phosphate (HepGP). This reaction is an ether-bond-formation step in the biosynthesis of archaea-type G1P-based membrane lipids found in Bacillales.</text>
</comment>
<comment type="catalytic activity">
    <reaction evidence="1">
        <text>sn-glycerol 1-phosphate + all-trans-heptaprenyl diphosphate = 3-heptaprenyl-sn-glycero-1-phosphate + diphosphate</text>
        <dbReference type="Rhea" id="RHEA:33495"/>
        <dbReference type="ChEBI" id="CHEBI:33019"/>
        <dbReference type="ChEBI" id="CHEBI:57685"/>
        <dbReference type="ChEBI" id="CHEBI:58206"/>
        <dbReference type="ChEBI" id="CHEBI:64781"/>
        <dbReference type="EC" id="2.5.1.n9"/>
    </reaction>
</comment>
<comment type="cofactor">
    <cofactor evidence="1">
        <name>Mg(2+)</name>
        <dbReference type="ChEBI" id="CHEBI:18420"/>
    </cofactor>
</comment>
<comment type="pathway">
    <text evidence="1">Membrane lipid metabolism; glycerophospholipid metabolism.</text>
</comment>
<comment type="subunit">
    <text evidence="1">Homodimer.</text>
</comment>
<comment type="similarity">
    <text evidence="1">Belongs to the GGGP/HepGP synthase family. Group I subfamily.</text>
</comment>
<evidence type="ECO:0000255" key="1">
    <source>
        <dbReference type="HAMAP-Rule" id="MF_00112"/>
    </source>
</evidence>
<protein>
    <recommendedName>
        <fullName evidence="1">Heptaprenylglyceryl phosphate synthase</fullName>
        <shortName evidence="1">HepGP synthase</shortName>
        <ecNumber evidence="1">2.5.1.n9</ecNumber>
    </recommendedName>
    <alternativeName>
        <fullName evidence="1">Glycerol-1-phosphate heptaprenyltransferase</fullName>
    </alternativeName>
</protein>
<organism>
    <name type="scientific">Bacillus mycoides (strain KBAB4)</name>
    <name type="common">Bacillus weihenstephanensis</name>
    <dbReference type="NCBI Taxonomy" id="315730"/>
    <lineage>
        <taxon>Bacteria</taxon>
        <taxon>Bacillati</taxon>
        <taxon>Bacillota</taxon>
        <taxon>Bacilli</taxon>
        <taxon>Bacillales</taxon>
        <taxon>Bacillaceae</taxon>
        <taxon>Bacillus</taxon>
        <taxon>Bacillus cereus group</taxon>
    </lineage>
</organism>
<reference key="1">
    <citation type="journal article" date="2008" name="Chem. Biol. Interact.">
        <title>Extending the Bacillus cereus group genomics to putative food-borne pathogens of different toxicity.</title>
        <authorList>
            <person name="Lapidus A."/>
            <person name="Goltsman E."/>
            <person name="Auger S."/>
            <person name="Galleron N."/>
            <person name="Segurens B."/>
            <person name="Dossat C."/>
            <person name="Land M.L."/>
            <person name="Broussolle V."/>
            <person name="Brillard J."/>
            <person name="Guinebretiere M.-H."/>
            <person name="Sanchis V."/>
            <person name="Nguen-the C."/>
            <person name="Lereclus D."/>
            <person name="Richardson P."/>
            <person name="Wincker P."/>
            <person name="Weissenbach J."/>
            <person name="Ehrlich S.D."/>
            <person name="Sorokin A."/>
        </authorList>
    </citation>
    <scope>NUCLEOTIDE SEQUENCE [LARGE SCALE GENOMIC DNA]</scope>
    <source>
        <strain>KBAB4</strain>
    </source>
</reference>
<keyword id="KW-0444">Lipid biosynthesis</keyword>
<keyword id="KW-0443">Lipid metabolism</keyword>
<keyword id="KW-0460">Magnesium</keyword>
<keyword id="KW-0479">Metal-binding</keyword>
<keyword id="KW-0594">Phospholipid biosynthesis</keyword>
<keyword id="KW-1208">Phospholipid metabolism</keyword>
<keyword id="KW-0808">Transferase</keyword>
<gene>
    <name evidence="1" type="primary">pcrB</name>
    <name type="ordered locus">BcerKBAB4_0285</name>
</gene>
<dbReference type="EC" id="2.5.1.n9" evidence="1"/>
<dbReference type="EMBL" id="CP000903">
    <property type="protein sequence ID" value="ABY41551.1"/>
    <property type="molecule type" value="Genomic_DNA"/>
</dbReference>
<dbReference type="RefSeq" id="WP_002029470.1">
    <property type="nucleotide sequence ID" value="NC_010184.1"/>
</dbReference>
<dbReference type="SMR" id="A9VRG1"/>
<dbReference type="KEGG" id="bwe:BcerKBAB4_0285"/>
<dbReference type="eggNOG" id="COG1646">
    <property type="taxonomic scope" value="Bacteria"/>
</dbReference>
<dbReference type="HOGENOM" id="CLU_095211_0_0_9"/>
<dbReference type="UniPathway" id="UPA00940"/>
<dbReference type="Proteomes" id="UP000002154">
    <property type="component" value="Chromosome"/>
</dbReference>
<dbReference type="GO" id="GO:0120536">
    <property type="term" value="F:heptaprenylglyceryl phosphate synthase activity"/>
    <property type="evidence" value="ECO:0007669"/>
    <property type="project" value="RHEA"/>
</dbReference>
<dbReference type="GO" id="GO:0000287">
    <property type="term" value="F:magnesium ion binding"/>
    <property type="evidence" value="ECO:0007669"/>
    <property type="project" value="UniProtKB-UniRule"/>
</dbReference>
<dbReference type="GO" id="GO:0046474">
    <property type="term" value="P:glycerophospholipid biosynthetic process"/>
    <property type="evidence" value="ECO:0007669"/>
    <property type="project" value="UniProtKB-UniRule"/>
</dbReference>
<dbReference type="CDD" id="cd02812">
    <property type="entry name" value="PcrB_like"/>
    <property type="match status" value="1"/>
</dbReference>
<dbReference type="FunFam" id="3.20.20.390:FF:000001">
    <property type="entry name" value="Heptaprenylglyceryl phosphate synthase"/>
    <property type="match status" value="1"/>
</dbReference>
<dbReference type="Gene3D" id="3.20.20.390">
    <property type="entry name" value="FMN-linked oxidoreductases"/>
    <property type="match status" value="1"/>
</dbReference>
<dbReference type="HAMAP" id="MF_00112">
    <property type="entry name" value="GGGP_HepGP_synthase"/>
    <property type="match status" value="1"/>
</dbReference>
<dbReference type="InterPro" id="IPR039074">
    <property type="entry name" value="GGGP/HepGP_synthase_I"/>
</dbReference>
<dbReference type="InterPro" id="IPR038597">
    <property type="entry name" value="GGGP/HepGP_synthase_sf"/>
</dbReference>
<dbReference type="InterPro" id="IPR008205">
    <property type="entry name" value="GGGP_HepGP_synthase"/>
</dbReference>
<dbReference type="NCBIfam" id="TIGR01768">
    <property type="entry name" value="GGGP-family"/>
    <property type="match status" value="1"/>
</dbReference>
<dbReference type="NCBIfam" id="NF003197">
    <property type="entry name" value="PRK04169.1-1"/>
    <property type="match status" value="1"/>
</dbReference>
<dbReference type="NCBIfam" id="NF003199">
    <property type="entry name" value="PRK04169.1-3"/>
    <property type="match status" value="1"/>
</dbReference>
<dbReference type="PANTHER" id="PTHR40029">
    <property type="match status" value="1"/>
</dbReference>
<dbReference type="PANTHER" id="PTHR40029:SF2">
    <property type="entry name" value="HEPTAPRENYLGLYCERYL PHOSPHATE SYNTHASE"/>
    <property type="match status" value="1"/>
</dbReference>
<dbReference type="Pfam" id="PF01884">
    <property type="entry name" value="PcrB"/>
    <property type="match status" value="1"/>
</dbReference>
<dbReference type="SUPFAM" id="SSF51395">
    <property type="entry name" value="FMN-linked oxidoreductases"/>
    <property type="match status" value="1"/>
</dbReference>
<name>PCRB_BACMK</name>
<proteinExistence type="inferred from homology"/>
<accession>A9VRG1</accession>
<sequence>MYDISKWKHVFKLDPNKELSDEHLEMICESGTDAVIVGGSDGITIDNVLHMLVSIRRYAVPCVLEVSDVEAITPGFDFYYIPSVLNSRKVEWVTGVHHEALKEFGDIMDWDEIYMEGYCVLNPEAKVAQLTDAKCDLTEDDVIAYARLADKLLHLPIFYLEYSGTYGDIELVKNVKAELKQAKLYYGGGISNAEQAKEMAQYADTVVVGNIIYDDIKSALKTVKAVKGE</sequence>